<reference key="1">
    <citation type="submission" date="2007-03" db="EMBL/GenBank/DDBJ databases">
        <title>Complete sequence of chromosome 1 of Burkholderia vietnamiensis G4.</title>
        <authorList>
            <consortium name="US DOE Joint Genome Institute"/>
            <person name="Copeland A."/>
            <person name="Lucas S."/>
            <person name="Lapidus A."/>
            <person name="Barry K."/>
            <person name="Detter J.C."/>
            <person name="Glavina del Rio T."/>
            <person name="Hammon N."/>
            <person name="Israni S."/>
            <person name="Dalin E."/>
            <person name="Tice H."/>
            <person name="Pitluck S."/>
            <person name="Chain P."/>
            <person name="Malfatti S."/>
            <person name="Shin M."/>
            <person name="Vergez L."/>
            <person name="Schmutz J."/>
            <person name="Larimer F."/>
            <person name="Land M."/>
            <person name="Hauser L."/>
            <person name="Kyrpides N."/>
            <person name="Tiedje J."/>
            <person name="Richardson P."/>
        </authorList>
    </citation>
    <scope>NUCLEOTIDE SEQUENCE [LARGE SCALE GENOMIC DNA]</scope>
    <source>
        <strain>G4 / LMG 22486</strain>
    </source>
</reference>
<keyword id="KW-0285">Flavoprotein</keyword>
<keyword id="KW-0288">FMN</keyword>
<keyword id="KW-0560">Oxidoreductase</keyword>
<keyword id="KW-0664">Pyridoxine biosynthesis</keyword>
<organism>
    <name type="scientific">Burkholderia vietnamiensis (strain G4 / LMG 22486)</name>
    <name type="common">Burkholderia cepacia (strain R1808)</name>
    <dbReference type="NCBI Taxonomy" id="269482"/>
    <lineage>
        <taxon>Bacteria</taxon>
        <taxon>Pseudomonadati</taxon>
        <taxon>Pseudomonadota</taxon>
        <taxon>Betaproteobacteria</taxon>
        <taxon>Burkholderiales</taxon>
        <taxon>Burkholderiaceae</taxon>
        <taxon>Burkholderia</taxon>
        <taxon>Burkholderia cepacia complex</taxon>
    </lineage>
</organism>
<name>PDXH_BURVG</name>
<feature type="chain" id="PRO_1000069689" description="Pyridoxine/pyridoxamine 5'-phosphate oxidase">
    <location>
        <begin position="1"/>
        <end position="214"/>
    </location>
</feature>
<feature type="binding site" evidence="1">
    <location>
        <begin position="8"/>
        <end position="11"/>
    </location>
    <ligand>
        <name>substrate</name>
    </ligand>
</feature>
<feature type="binding site" evidence="1">
    <location>
        <begin position="61"/>
        <end position="66"/>
    </location>
    <ligand>
        <name>FMN</name>
        <dbReference type="ChEBI" id="CHEBI:58210"/>
    </ligand>
</feature>
<feature type="binding site" evidence="1">
    <location>
        <position position="66"/>
    </location>
    <ligand>
        <name>substrate</name>
    </ligand>
</feature>
<feature type="binding site" evidence="1">
    <location>
        <begin position="76"/>
        <end position="77"/>
    </location>
    <ligand>
        <name>FMN</name>
        <dbReference type="ChEBI" id="CHEBI:58210"/>
    </ligand>
</feature>
<feature type="binding site" evidence="1">
    <location>
        <position position="82"/>
    </location>
    <ligand>
        <name>FMN</name>
        <dbReference type="ChEBI" id="CHEBI:58210"/>
    </ligand>
</feature>
<feature type="binding site" evidence="1">
    <location>
        <position position="83"/>
    </location>
    <ligand>
        <name>FMN</name>
        <dbReference type="ChEBI" id="CHEBI:58210"/>
    </ligand>
</feature>
<feature type="binding site" evidence="1">
    <location>
        <position position="105"/>
    </location>
    <ligand>
        <name>FMN</name>
        <dbReference type="ChEBI" id="CHEBI:58210"/>
    </ligand>
</feature>
<feature type="binding site" evidence="1">
    <location>
        <position position="123"/>
    </location>
    <ligand>
        <name>substrate</name>
    </ligand>
</feature>
<feature type="binding site" evidence="1">
    <location>
        <position position="127"/>
    </location>
    <ligand>
        <name>substrate</name>
    </ligand>
</feature>
<feature type="binding site" evidence="1">
    <location>
        <position position="131"/>
    </location>
    <ligand>
        <name>substrate</name>
    </ligand>
</feature>
<feature type="binding site" evidence="1">
    <location>
        <begin position="140"/>
        <end position="141"/>
    </location>
    <ligand>
        <name>FMN</name>
        <dbReference type="ChEBI" id="CHEBI:58210"/>
    </ligand>
</feature>
<feature type="binding site" evidence="1">
    <location>
        <position position="184"/>
    </location>
    <ligand>
        <name>FMN</name>
        <dbReference type="ChEBI" id="CHEBI:58210"/>
    </ligand>
</feature>
<feature type="binding site" evidence="1">
    <location>
        <begin position="190"/>
        <end position="192"/>
    </location>
    <ligand>
        <name>substrate</name>
    </ligand>
</feature>
<feature type="binding site" evidence="1">
    <location>
        <position position="194"/>
    </location>
    <ligand>
        <name>FMN</name>
        <dbReference type="ChEBI" id="CHEBI:58210"/>
    </ligand>
</feature>
<evidence type="ECO:0000255" key="1">
    <source>
        <dbReference type="HAMAP-Rule" id="MF_01629"/>
    </source>
</evidence>
<gene>
    <name evidence="1" type="primary">pdxH</name>
    <name type="ordered locus">Bcep1808_2662</name>
</gene>
<comment type="function">
    <text evidence="1">Catalyzes the oxidation of either pyridoxine 5'-phosphate (PNP) or pyridoxamine 5'-phosphate (PMP) into pyridoxal 5'-phosphate (PLP).</text>
</comment>
<comment type="catalytic activity">
    <reaction evidence="1">
        <text>pyridoxamine 5'-phosphate + O2 + H2O = pyridoxal 5'-phosphate + H2O2 + NH4(+)</text>
        <dbReference type="Rhea" id="RHEA:15817"/>
        <dbReference type="ChEBI" id="CHEBI:15377"/>
        <dbReference type="ChEBI" id="CHEBI:15379"/>
        <dbReference type="ChEBI" id="CHEBI:16240"/>
        <dbReference type="ChEBI" id="CHEBI:28938"/>
        <dbReference type="ChEBI" id="CHEBI:58451"/>
        <dbReference type="ChEBI" id="CHEBI:597326"/>
        <dbReference type="EC" id="1.4.3.5"/>
    </reaction>
</comment>
<comment type="catalytic activity">
    <reaction evidence="1">
        <text>pyridoxine 5'-phosphate + O2 = pyridoxal 5'-phosphate + H2O2</text>
        <dbReference type="Rhea" id="RHEA:15149"/>
        <dbReference type="ChEBI" id="CHEBI:15379"/>
        <dbReference type="ChEBI" id="CHEBI:16240"/>
        <dbReference type="ChEBI" id="CHEBI:58589"/>
        <dbReference type="ChEBI" id="CHEBI:597326"/>
        <dbReference type="EC" id="1.4.3.5"/>
    </reaction>
</comment>
<comment type="cofactor">
    <cofactor evidence="1">
        <name>FMN</name>
        <dbReference type="ChEBI" id="CHEBI:58210"/>
    </cofactor>
    <text evidence="1">Binds 1 FMN per subunit.</text>
</comment>
<comment type="pathway">
    <text evidence="1">Cofactor metabolism; pyridoxal 5'-phosphate salvage; pyridoxal 5'-phosphate from pyridoxamine 5'-phosphate: step 1/1.</text>
</comment>
<comment type="pathway">
    <text evidence="1">Cofactor metabolism; pyridoxal 5'-phosphate salvage; pyridoxal 5'-phosphate from pyridoxine 5'-phosphate: step 1/1.</text>
</comment>
<comment type="subunit">
    <text evidence="1">Homodimer.</text>
</comment>
<comment type="similarity">
    <text evidence="1">Belongs to the pyridoxamine 5'-phosphate oxidase family.</text>
</comment>
<accession>A4JHA1</accession>
<protein>
    <recommendedName>
        <fullName evidence="1">Pyridoxine/pyridoxamine 5'-phosphate oxidase</fullName>
        <ecNumber evidence="1">1.4.3.5</ecNumber>
    </recommendedName>
    <alternativeName>
        <fullName evidence="1">PNP/PMP oxidase</fullName>
        <shortName evidence="1">PNPOx</shortName>
    </alternativeName>
    <alternativeName>
        <fullName evidence="1">Pyridoxal 5'-phosphate synthase</fullName>
    </alternativeName>
</protein>
<sequence length="214" mass="24177">MTTLADLRINYSRASLDEADAAPDPFVQFDRWFKEALAAKLPEPNTMTVATVGADGRPSARILLIKAVDERGFVFFTNYESRKGHDLAANPHAALLFYWIELERQVRIEGRIEKTSTDESDRYFASRPLGSRIGAWASEQSTVIDSRATLEAREKEVAARYGENPPRPPHWGGYRLVPDAIEFWQGRPSRLHDRLLYTRDDAAATGWSISRLAP</sequence>
<dbReference type="EC" id="1.4.3.5" evidence="1"/>
<dbReference type="EMBL" id="CP000614">
    <property type="protein sequence ID" value="ABO55654.1"/>
    <property type="molecule type" value="Genomic_DNA"/>
</dbReference>
<dbReference type="SMR" id="A4JHA1"/>
<dbReference type="KEGG" id="bvi:Bcep1808_2662"/>
<dbReference type="eggNOG" id="COG0259">
    <property type="taxonomic scope" value="Bacteria"/>
</dbReference>
<dbReference type="HOGENOM" id="CLU_032263_2_2_4"/>
<dbReference type="UniPathway" id="UPA01068">
    <property type="reaction ID" value="UER00304"/>
</dbReference>
<dbReference type="UniPathway" id="UPA01068">
    <property type="reaction ID" value="UER00305"/>
</dbReference>
<dbReference type="Proteomes" id="UP000002287">
    <property type="component" value="Chromosome 1"/>
</dbReference>
<dbReference type="GO" id="GO:0010181">
    <property type="term" value="F:FMN binding"/>
    <property type="evidence" value="ECO:0007669"/>
    <property type="project" value="UniProtKB-UniRule"/>
</dbReference>
<dbReference type="GO" id="GO:0004733">
    <property type="term" value="F:pyridoxamine phosphate oxidase activity"/>
    <property type="evidence" value="ECO:0007669"/>
    <property type="project" value="UniProtKB-UniRule"/>
</dbReference>
<dbReference type="GO" id="GO:0008615">
    <property type="term" value="P:pyridoxine biosynthetic process"/>
    <property type="evidence" value="ECO:0007669"/>
    <property type="project" value="UniProtKB-KW"/>
</dbReference>
<dbReference type="FunFam" id="2.30.110.10:FF:000005">
    <property type="entry name" value="NAD(P)H-hydrate epimerase"/>
    <property type="match status" value="1"/>
</dbReference>
<dbReference type="Gene3D" id="2.30.110.10">
    <property type="entry name" value="Electron Transport, Fmn-binding Protein, Chain A"/>
    <property type="match status" value="1"/>
</dbReference>
<dbReference type="HAMAP" id="MF_01629">
    <property type="entry name" value="PdxH"/>
    <property type="match status" value="1"/>
</dbReference>
<dbReference type="InterPro" id="IPR000659">
    <property type="entry name" value="Pyridox_Oxase"/>
</dbReference>
<dbReference type="InterPro" id="IPR019740">
    <property type="entry name" value="Pyridox_Oxase_CS"/>
</dbReference>
<dbReference type="InterPro" id="IPR011576">
    <property type="entry name" value="Pyridox_Oxase_N"/>
</dbReference>
<dbReference type="InterPro" id="IPR019576">
    <property type="entry name" value="Pyridoxamine_oxidase_dimer_C"/>
</dbReference>
<dbReference type="InterPro" id="IPR012349">
    <property type="entry name" value="Split_barrel_FMN-bd"/>
</dbReference>
<dbReference type="NCBIfam" id="TIGR00558">
    <property type="entry name" value="pdxH"/>
    <property type="match status" value="1"/>
</dbReference>
<dbReference type="NCBIfam" id="NF004231">
    <property type="entry name" value="PRK05679.1"/>
    <property type="match status" value="1"/>
</dbReference>
<dbReference type="PANTHER" id="PTHR10851:SF0">
    <property type="entry name" value="PYRIDOXINE-5'-PHOSPHATE OXIDASE"/>
    <property type="match status" value="1"/>
</dbReference>
<dbReference type="PANTHER" id="PTHR10851">
    <property type="entry name" value="PYRIDOXINE-5-PHOSPHATE OXIDASE"/>
    <property type="match status" value="1"/>
</dbReference>
<dbReference type="Pfam" id="PF10590">
    <property type="entry name" value="PNP_phzG_C"/>
    <property type="match status" value="1"/>
</dbReference>
<dbReference type="Pfam" id="PF01243">
    <property type="entry name" value="PNPOx_N"/>
    <property type="match status" value="1"/>
</dbReference>
<dbReference type="PIRSF" id="PIRSF000190">
    <property type="entry name" value="Pyd_amn-ph_oxd"/>
    <property type="match status" value="1"/>
</dbReference>
<dbReference type="SUPFAM" id="SSF50475">
    <property type="entry name" value="FMN-binding split barrel"/>
    <property type="match status" value="1"/>
</dbReference>
<dbReference type="PROSITE" id="PS01064">
    <property type="entry name" value="PYRIDOX_OXIDASE"/>
    <property type="match status" value="1"/>
</dbReference>
<proteinExistence type="inferred from homology"/>